<comment type="subcellular location">
    <subcellularLocation>
        <location evidence="2">Host membrane</location>
        <topology evidence="2">Single-pass membrane protein</topology>
    </subcellularLocation>
</comment>
<organism>
    <name type="scientific">Acidianus filamentous virus 2 (isolate Italy/Pozzuoli)</name>
    <name type="common">AFV-2</name>
    <dbReference type="NCBI Taxonomy" id="654910"/>
    <lineage>
        <taxon>Viruses</taxon>
        <taxon>Adnaviria</taxon>
        <taxon>Zilligvirae</taxon>
        <taxon>Taleaviricota</taxon>
        <taxon>Tokiviricetes</taxon>
        <taxon>Ligamenvirales</taxon>
        <taxon>Lipothrixviridae</taxon>
        <taxon>Deltalipothrixvirus</taxon>
        <taxon>Acidianus filamentous virus 2</taxon>
    </lineage>
</organism>
<sequence>MSSTTSTINLSSLGSAINDVLNIIVQYLPVFVTVAVLFGIITYMTGGLGGLFSGITGIFGS</sequence>
<feature type="chain" id="PRO_0000384486" description="Uncharacterized protein ORF61">
    <location>
        <begin position="1"/>
        <end position="61"/>
    </location>
</feature>
<feature type="topological domain" description="Extracellular" evidence="1">
    <location>
        <begin position="1"/>
        <end position="20"/>
    </location>
</feature>
<feature type="transmembrane region" description="Helical" evidence="1">
    <location>
        <begin position="21"/>
        <end position="41"/>
    </location>
</feature>
<feature type="topological domain" description="Cytoplasmic" evidence="1">
    <location>
        <begin position="42"/>
        <end position="61"/>
    </location>
</feature>
<name>Y061_AFV2P</name>
<protein>
    <recommendedName>
        <fullName>Uncharacterized protein ORF61</fullName>
    </recommendedName>
</protein>
<dbReference type="EMBL" id="AJ854042">
    <property type="protein sequence ID" value="CAH69415.1"/>
    <property type="molecule type" value="Genomic_DNA"/>
</dbReference>
<dbReference type="RefSeq" id="YP_001496953.1">
    <property type="nucleotide sequence ID" value="NC_009884.1"/>
</dbReference>
<dbReference type="SMR" id="Q573E1"/>
<dbReference type="KEGG" id="vg:5656092"/>
<dbReference type="Proteomes" id="UP000006364">
    <property type="component" value="Genome"/>
</dbReference>
<dbReference type="GO" id="GO:0033644">
    <property type="term" value="C:host cell membrane"/>
    <property type="evidence" value="ECO:0007669"/>
    <property type="project" value="UniProtKB-SubCell"/>
</dbReference>
<dbReference type="GO" id="GO:0016020">
    <property type="term" value="C:membrane"/>
    <property type="evidence" value="ECO:0007669"/>
    <property type="project" value="UniProtKB-KW"/>
</dbReference>
<reference key="1">
    <citation type="journal article" date="2005" name="J. Bacteriol.">
        <title>Structure and genome organization of AFV2, a novel archaeal lipothrixvirus with unusual terminal and core structures.</title>
        <authorList>
            <person name="Haring M."/>
            <person name="Vestergaard G."/>
            <person name="Brugger K."/>
            <person name="Rachel R."/>
            <person name="Garrett R.A."/>
            <person name="Prangishvili D."/>
        </authorList>
    </citation>
    <scope>NUCLEOTIDE SEQUENCE [GENOMIC DNA]</scope>
</reference>
<organismHost>
    <name type="scientific">Acidianus sp. F28</name>
    <dbReference type="NCBI Taxonomy" id="315458"/>
</organismHost>
<gene>
    <name type="ORF">ORF61</name>
</gene>
<proteinExistence type="predicted"/>
<keyword id="KW-1043">Host membrane</keyword>
<keyword id="KW-0472">Membrane</keyword>
<keyword id="KW-1185">Reference proteome</keyword>
<keyword id="KW-0812">Transmembrane</keyword>
<keyword id="KW-1133">Transmembrane helix</keyword>
<accession>Q573E1</accession>
<evidence type="ECO:0000255" key="1"/>
<evidence type="ECO:0000305" key="2"/>